<accession>Q7A6J4</accession>
<dbReference type="EC" id="1.6.5.9" evidence="1"/>
<dbReference type="EMBL" id="BA000018">
    <property type="protein sequence ID" value="BAB42041.1"/>
    <property type="molecule type" value="Genomic_DNA"/>
</dbReference>
<dbReference type="PIR" id="F89860">
    <property type="entry name" value="F89860"/>
</dbReference>
<dbReference type="RefSeq" id="WP_000046076.1">
    <property type="nucleotide sequence ID" value="NC_002745.2"/>
</dbReference>
<dbReference type="SMR" id="Q7A6J4"/>
<dbReference type="EnsemblBacteria" id="BAB42041">
    <property type="protein sequence ID" value="BAB42041"/>
    <property type="gene ID" value="BAB42041"/>
</dbReference>
<dbReference type="KEGG" id="sau:SA0802"/>
<dbReference type="HOGENOM" id="CLU_021377_7_2_9"/>
<dbReference type="GO" id="GO:0005886">
    <property type="term" value="C:plasma membrane"/>
    <property type="evidence" value="ECO:0007669"/>
    <property type="project" value="UniProtKB-SubCell"/>
</dbReference>
<dbReference type="GO" id="GO:0003955">
    <property type="term" value="F:NAD(P)H dehydrogenase (quinone) activity"/>
    <property type="evidence" value="ECO:0007669"/>
    <property type="project" value="TreeGrafter"/>
</dbReference>
<dbReference type="GO" id="GO:0050136">
    <property type="term" value="F:NADH:ubiquinone reductase (non-electrogenic) activity"/>
    <property type="evidence" value="ECO:0007669"/>
    <property type="project" value="UniProtKB-EC"/>
</dbReference>
<dbReference type="GO" id="GO:0019646">
    <property type="term" value="P:aerobic electron transport chain"/>
    <property type="evidence" value="ECO:0007669"/>
    <property type="project" value="TreeGrafter"/>
</dbReference>
<dbReference type="FunFam" id="3.50.50.100:FF:000004">
    <property type="entry name" value="Pyridine nucleotide-disulfide oxidoreductase"/>
    <property type="match status" value="1"/>
</dbReference>
<dbReference type="Gene3D" id="3.50.50.100">
    <property type="match status" value="1"/>
</dbReference>
<dbReference type="InterPro" id="IPR036188">
    <property type="entry name" value="FAD/NAD-bd_sf"/>
</dbReference>
<dbReference type="InterPro" id="IPR023753">
    <property type="entry name" value="FAD/NAD-binding_dom"/>
</dbReference>
<dbReference type="InterPro" id="IPR051169">
    <property type="entry name" value="NADH-Q_oxidoreductase"/>
</dbReference>
<dbReference type="PANTHER" id="PTHR42913:SF3">
    <property type="entry name" value="64 KDA MITOCHONDRIAL NADH DEHYDROGENASE (EUROFUNG)"/>
    <property type="match status" value="1"/>
</dbReference>
<dbReference type="PANTHER" id="PTHR42913">
    <property type="entry name" value="APOPTOSIS-INDUCING FACTOR 1"/>
    <property type="match status" value="1"/>
</dbReference>
<dbReference type="Pfam" id="PF07992">
    <property type="entry name" value="Pyr_redox_2"/>
    <property type="match status" value="1"/>
</dbReference>
<dbReference type="PRINTS" id="PR00368">
    <property type="entry name" value="FADPNR"/>
</dbReference>
<dbReference type="SUPFAM" id="SSF51905">
    <property type="entry name" value="FAD/NAD(P)-binding domain"/>
    <property type="match status" value="2"/>
</dbReference>
<name>NDH_STAAN</name>
<organism>
    <name type="scientific">Staphylococcus aureus (strain N315)</name>
    <dbReference type="NCBI Taxonomy" id="158879"/>
    <lineage>
        <taxon>Bacteria</taxon>
        <taxon>Bacillati</taxon>
        <taxon>Bacillota</taxon>
        <taxon>Bacilli</taxon>
        <taxon>Bacillales</taxon>
        <taxon>Staphylococcaceae</taxon>
        <taxon>Staphylococcus</taxon>
    </lineage>
</organism>
<proteinExistence type="evidence at protein level"/>
<sequence length="402" mass="44104">MAQDRKKVLVLGAGYAGLQTVTKLQKAISTEEAEITLINKNEYHYEATWLHEASAGTLNYEDVLYPVESVLKKDKVNFVQAEVTKIDRDAKKVETNQGIYDFDILVVALGFVSETFGIEGMKDHAFQIENVITARELSRHIEDKFANYAASKEKDDNDLSILVGGAGFTGVEFLGELTDRIPELCSKYGVDQNKVKITCVEAAPKMLPMFSEELVNHAVSYLEDRGVEFKIATPIVACNEKGFVVEVDGEKQQLNAGTSVWAAGVRGSKLMEESFEGVKRGRIVTKQDLTINGYDNIFVIGDCSAFIPAGEERPLPTTAQIAMQQGESVAKNIKRILNGESTEEFEYVDRGTVCSLGSHDGVGMVFGKPIAGKKAAFMKKVIDTRAVFKIGGIGLAFKKGKF</sequence>
<gene>
    <name type="ordered locus">SA0802</name>
</gene>
<evidence type="ECO:0000250" key="1">
    <source>
        <dbReference type="UniProtKB" id="Q2FZV7"/>
    </source>
</evidence>
<evidence type="ECO:0000305" key="2"/>
<reference key="1">
    <citation type="journal article" date="2001" name="Lancet">
        <title>Whole genome sequencing of meticillin-resistant Staphylococcus aureus.</title>
        <authorList>
            <person name="Kuroda M."/>
            <person name="Ohta T."/>
            <person name="Uchiyama I."/>
            <person name="Baba T."/>
            <person name="Yuzawa H."/>
            <person name="Kobayashi I."/>
            <person name="Cui L."/>
            <person name="Oguchi A."/>
            <person name="Aoki K."/>
            <person name="Nagai Y."/>
            <person name="Lian J.-Q."/>
            <person name="Ito T."/>
            <person name="Kanamori M."/>
            <person name="Matsumaru H."/>
            <person name="Maruyama A."/>
            <person name="Murakami H."/>
            <person name="Hosoyama A."/>
            <person name="Mizutani-Ui Y."/>
            <person name="Takahashi N.K."/>
            <person name="Sawano T."/>
            <person name="Inoue R."/>
            <person name="Kaito C."/>
            <person name="Sekimizu K."/>
            <person name="Hirakawa H."/>
            <person name="Kuhara S."/>
            <person name="Goto S."/>
            <person name="Yabuzaki J."/>
            <person name="Kanehisa M."/>
            <person name="Yamashita A."/>
            <person name="Oshima K."/>
            <person name="Furuya K."/>
            <person name="Yoshino C."/>
            <person name="Shiba T."/>
            <person name="Hattori M."/>
            <person name="Ogasawara N."/>
            <person name="Hayashi H."/>
            <person name="Hiramatsu K."/>
        </authorList>
    </citation>
    <scope>NUCLEOTIDE SEQUENCE [LARGE SCALE GENOMIC DNA]</scope>
    <source>
        <strain>N315</strain>
    </source>
</reference>
<reference key="2">
    <citation type="submission" date="2005-11" db="UniProtKB">
        <title>Shotgun proteomic analysis of total protein extract of S. aureus S30 versus N315.</title>
        <authorList>
            <person name="Stenz L."/>
        </authorList>
    </citation>
    <scope>IDENTIFICATION BY MASS SPECTROMETRY</scope>
</reference>
<reference key="3">
    <citation type="submission" date="2007-10" db="UniProtKB">
        <title>Shotgun proteomic analysis of total and membrane protein extracts of S. aureus strain N315.</title>
        <authorList>
            <person name="Vaezzadeh A.R."/>
            <person name="Deshusses J."/>
            <person name="Lescuyer P."/>
            <person name="Hochstrasser D.F."/>
        </authorList>
    </citation>
    <scope>IDENTIFICATION BY MASS SPECTROMETRY [LARGE SCALE ANALYSIS]</scope>
    <source>
        <strain>N315</strain>
    </source>
</reference>
<comment type="function">
    <text evidence="1">Alternative, nonproton pumping NADH:quinone oxidoreductase that delivers electrons to the respiratory chain by oxidation of NADH and reduction of quinones, and contributes to the regeneration of NAD(+).</text>
</comment>
<comment type="catalytic activity">
    <reaction evidence="1">
        <text>a quinone + NADH + H(+) = a quinol + NAD(+)</text>
        <dbReference type="Rhea" id="RHEA:46160"/>
        <dbReference type="ChEBI" id="CHEBI:15378"/>
        <dbReference type="ChEBI" id="CHEBI:24646"/>
        <dbReference type="ChEBI" id="CHEBI:57540"/>
        <dbReference type="ChEBI" id="CHEBI:57945"/>
        <dbReference type="ChEBI" id="CHEBI:132124"/>
        <dbReference type="EC" id="1.6.5.9"/>
    </reaction>
</comment>
<comment type="cofactor">
    <cofactor evidence="1">
        <name>FAD</name>
        <dbReference type="ChEBI" id="CHEBI:57692"/>
    </cofactor>
    <text evidence="1">Binds 1 FAD per subunit.</text>
</comment>
<comment type="subcellular location">
    <subcellularLocation>
        <location evidence="1">Cell membrane</location>
    </subcellularLocation>
</comment>
<comment type="similarity">
    <text evidence="2">Belongs to the NADH dehydrogenase family.</text>
</comment>
<keyword id="KW-1003">Cell membrane</keyword>
<keyword id="KW-0274">FAD</keyword>
<keyword id="KW-0285">Flavoprotein</keyword>
<keyword id="KW-0472">Membrane</keyword>
<keyword id="KW-0520">NAD</keyword>
<keyword id="KW-0560">Oxidoreductase</keyword>
<feature type="chain" id="PRO_0000287370" description="Type II NADH:quinone oxidoreductase">
    <location>
        <begin position="1"/>
        <end position="402"/>
    </location>
</feature>
<feature type="active site" evidence="1">
    <location>
        <position position="172"/>
    </location>
</feature>
<feature type="binding site" evidence="1">
    <location>
        <begin position="12"/>
        <end position="16"/>
    </location>
    <ligand>
        <name>FAD</name>
        <dbReference type="ChEBI" id="CHEBI:57692"/>
    </ligand>
</feature>
<feature type="binding site" evidence="1">
    <location>
        <begin position="39"/>
        <end position="40"/>
    </location>
    <ligand>
        <name>FAD</name>
        <dbReference type="ChEBI" id="CHEBI:57692"/>
    </ligand>
</feature>
<feature type="binding site" evidence="1">
    <location>
        <position position="83"/>
    </location>
    <ligand>
        <name>FAD</name>
        <dbReference type="ChEBI" id="CHEBI:57692"/>
    </ligand>
</feature>
<feature type="binding site" evidence="1">
    <location>
        <position position="302"/>
    </location>
    <ligand>
        <name>FAD</name>
        <dbReference type="ChEBI" id="CHEBI:57692"/>
    </ligand>
</feature>
<feature type="binding site" evidence="1">
    <location>
        <begin position="319"/>
        <end position="320"/>
    </location>
    <ligand>
        <name>FAD</name>
        <dbReference type="ChEBI" id="CHEBI:57692"/>
    </ligand>
</feature>
<feature type="binding site" evidence="1">
    <location>
        <position position="379"/>
    </location>
    <ligand>
        <name>FAD</name>
        <dbReference type="ChEBI" id="CHEBI:57692"/>
    </ligand>
</feature>
<protein>
    <recommendedName>
        <fullName evidence="1">Type II NADH:quinone oxidoreductase</fullName>
        <ecNumber evidence="1">1.6.5.9</ecNumber>
    </recommendedName>
    <alternativeName>
        <fullName evidence="1">NDH-2</fullName>
    </alternativeName>
</protein>